<proteinExistence type="inferred from homology"/>
<accession>Q8WJN9</accession>
<name>MATK_PURTR</name>
<geneLocation type="chloroplast"/>
<organism>
    <name type="scientific">Purshia tridentata</name>
    <name type="common">Antelope bitterbrush</name>
    <name type="synonym">Tigarea tridentata</name>
    <dbReference type="NCBI Taxonomy" id="32243"/>
    <lineage>
        <taxon>Eukaryota</taxon>
        <taxon>Viridiplantae</taxon>
        <taxon>Streptophyta</taxon>
        <taxon>Embryophyta</taxon>
        <taxon>Tracheophyta</taxon>
        <taxon>Spermatophyta</taxon>
        <taxon>Magnoliopsida</taxon>
        <taxon>eudicotyledons</taxon>
        <taxon>Gunneridae</taxon>
        <taxon>Pentapetalae</taxon>
        <taxon>rosids</taxon>
        <taxon>fabids</taxon>
        <taxon>Rosales</taxon>
        <taxon>Rosaceae</taxon>
        <taxon>Dryadoideae</taxon>
        <taxon>Purshia</taxon>
    </lineage>
</organism>
<gene>
    <name evidence="1" type="primary">matK</name>
</gene>
<keyword id="KW-0150">Chloroplast</keyword>
<keyword id="KW-0507">mRNA processing</keyword>
<keyword id="KW-0934">Plastid</keyword>
<keyword id="KW-0694">RNA-binding</keyword>
<keyword id="KW-0819">tRNA processing</keyword>
<dbReference type="EMBL" id="AF288119">
    <property type="protein sequence ID" value="AAL36013.1"/>
    <property type="molecule type" value="Genomic_DNA"/>
</dbReference>
<dbReference type="GO" id="GO:0009507">
    <property type="term" value="C:chloroplast"/>
    <property type="evidence" value="ECO:0007669"/>
    <property type="project" value="UniProtKB-SubCell"/>
</dbReference>
<dbReference type="GO" id="GO:0003723">
    <property type="term" value="F:RNA binding"/>
    <property type="evidence" value="ECO:0007669"/>
    <property type="project" value="UniProtKB-KW"/>
</dbReference>
<dbReference type="GO" id="GO:0006397">
    <property type="term" value="P:mRNA processing"/>
    <property type="evidence" value="ECO:0007669"/>
    <property type="project" value="UniProtKB-KW"/>
</dbReference>
<dbReference type="GO" id="GO:0008380">
    <property type="term" value="P:RNA splicing"/>
    <property type="evidence" value="ECO:0007669"/>
    <property type="project" value="UniProtKB-UniRule"/>
</dbReference>
<dbReference type="GO" id="GO:0008033">
    <property type="term" value="P:tRNA processing"/>
    <property type="evidence" value="ECO:0007669"/>
    <property type="project" value="UniProtKB-KW"/>
</dbReference>
<dbReference type="HAMAP" id="MF_01390">
    <property type="entry name" value="MatK"/>
    <property type="match status" value="1"/>
</dbReference>
<dbReference type="InterPro" id="IPR024937">
    <property type="entry name" value="Domain_X"/>
</dbReference>
<dbReference type="InterPro" id="IPR002866">
    <property type="entry name" value="Maturase_MatK"/>
</dbReference>
<dbReference type="InterPro" id="IPR024942">
    <property type="entry name" value="Maturase_MatK_N"/>
</dbReference>
<dbReference type="PANTHER" id="PTHR34811">
    <property type="entry name" value="MATURASE K"/>
    <property type="match status" value="1"/>
</dbReference>
<dbReference type="PANTHER" id="PTHR34811:SF1">
    <property type="entry name" value="MATURASE K"/>
    <property type="match status" value="1"/>
</dbReference>
<dbReference type="Pfam" id="PF01348">
    <property type="entry name" value="Intron_maturas2"/>
    <property type="match status" value="1"/>
</dbReference>
<dbReference type="Pfam" id="PF01824">
    <property type="entry name" value="MatK_N"/>
    <property type="match status" value="1"/>
</dbReference>
<evidence type="ECO:0000255" key="1">
    <source>
        <dbReference type="HAMAP-Rule" id="MF_01390"/>
    </source>
</evidence>
<feature type="chain" id="PRO_0000143658" description="Maturase K">
    <location>
        <begin position="1"/>
        <end position="503"/>
    </location>
</feature>
<sequence length="503" mass="59598">MEEFQGYLELDRSQQHDFLYPLIFREYIYALAHDHGLNRSILLDNVGYDNKSSLLIIKRLISRMYQQNHLIISANDSNPPQNWGYNKNLYCQMISEGFAVIVEIPFSLRLVSSLEGTETVKSYNLRSIHSIFPFLEDKFPHLNYGSDVLIPYPIHLEILVQTLRYWAKDPSSLHLLRLFLHDYYNLNSLITPNKSIFSKSNPRLFLLLYNSYVCEYESILLFLRNQSSHLQFTSSWIFFERIHFYEKIKYPVEEVFANDFPAILWFFKDPFMHYVRYQGKSILASKDTPLLMNKWKYYLVNLWQCHFYVWSQPGRIDINQLSKHSLDFLGYLSSIRPNLSVVRSQMLENSFIMDNAMKKFDTLVPIIPLIGSLAKVKFCNALGHPISKSTWADSSDFDIIDRFVRICRNLSHYYSGSSKKKSLYQIKYILRLSCVKTLARKHKSTVRTFLKRLGSKLLEEFFTEEEQILSLIFPRASSTLKRFYRERIWYLDIFCINDLVNHE</sequence>
<comment type="function">
    <text evidence="1">Usually encoded in the trnK tRNA gene intron. Probably assists in splicing its own and other chloroplast group II introns.</text>
</comment>
<comment type="subcellular location">
    <subcellularLocation>
        <location>Plastid</location>
        <location>Chloroplast</location>
    </subcellularLocation>
</comment>
<comment type="similarity">
    <text evidence="1">Belongs to the intron maturase 2 family. MatK subfamily.</text>
</comment>
<protein>
    <recommendedName>
        <fullName evidence="1">Maturase K</fullName>
    </recommendedName>
    <alternativeName>
        <fullName evidence="1">Intron maturase</fullName>
    </alternativeName>
</protein>
<reference key="1">
    <citation type="submission" date="2000-07" db="EMBL/GenBank/DDBJ databases">
        <title>Phylogenetic relationships among putative genes encoding polygalacturonase inhibitor proteins (PGIPs) in Rosaceae.</title>
        <authorList>
            <person name="Potter D."/>
            <person name="Gao F."/>
            <person name="Oh S.-H."/>
            <person name="Baggett S."/>
        </authorList>
    </citation>
    <scope>NUCLEOTIDE SEQUENCE [GENOMIC DNA]</scope>
</reference>